<name>SLYA_ECO7I</name>
<reference key="1">
    <citation type="journal article" date="2009" name="PLoS Genet.">
        <title>Organised genome dynamics in the Escherichia coli species results in highly diverse adaptive paths.</title>
        <authorList>
            <person name="Touchon M."/>
            <person name="Hoede C."/>
            <person name="Tenaillon O."/>
            <person name="Barbe V."/>
            <person name="Baeriswyl S."/>
            <person name="Bidet P."/>
            <person name="Bingen E."/>
            <person name="Bonacorsi S."/>
            <person name="Bouchier C."/>
            <person name="Bouvet O."/>
            <person name="Calteau A."/>
            <person name="Chiapello H."/>
            <person name="Clermont O."/>
            <person name="Cruveiller S."/>
            <person name="Danchin A."/>
            <person name="Diard M."/>
            <person name="Dossat C."/>
            <person name="Karoui M.E."/>
            <person name="Frapy E."/>
            <person name="Garry L."/>
            <person name="Ghigo J.M."/>
            <person name="Gilles A.M."/>
            <person name="Johnson J."/>
            <person name="Le Bouguenec C."/>
            <person name="Lescat M."/>
            <person name="Mangenot S."/>
            <person name="Martinez-Jehanne V."/>
            <person name="Matic I."/>
            <person name="Nassif X."/>
            <person name="Oztas S."/>
            <person name="Petit M.A."/>
            <person name="Pichon C."/>
            <person name="Rouy Z."/>
            <person name="Ruf C.S."/>
            <person name="Schneider D."/>
            <person name="Tourret J."/>
            <person name="Vacherie B."/>
            <person name="Vallenet D."/>
            <person name="Medigue C."/>
            <person name="Rocha E.P.C."/>
            <person name="Denamur E."/>
        </authorList>
    </citation>
    <scope>NUCLEOTIDE SEQUENCE [LARGE SCALE GENOMIC DNA]</scope>
    <source>
        <strain>IAI39 / ExPEC</strain>
    </source>
</reference>
<feature type="chain" id="PRO_1000188009" description="Transcriptional regulator SlyA">
    <location>
        <begin position="1"/>
        <end position="144"/>
    </location>
</feature>
<feature type="domain" description="HTH marR-type" evidence="1">
    <location>
        <begin position="2"/>
        <end position="135"/>
    </location>
</feature>
<feature type="DNA-binding region" description="H-T-H motif" evidence="1">
    <location>
        <begin position="49"/>
        <end position="72"/>
    </location>
</feature>
<proteinExistence type="inferred from homology"/>
<evidence type="ECO:0000255" key="1">
    <source>
        <dbReference type="HAMAP-Rule" id="MF_01819"/>
    </source>
</evidence>
<dbReference type="EMBL" id="CU928164">
    <property type="protein sequence ID" value="CAR17546.1"/>
    <property type="molecule type" value="Genomic_DNA"/>
</dbReference>
<dbReference type="RefSeq" id="WP_000445640.1">
    <property type="nucleotide sequence ID" value="NC_011750.1"/>
</dbReference>
<dbReference type="RefSeq" id="YP_002407418.1">
    <property type="nucleotide sequence ID" value="NC_011750.1"/>
</dbReference>
<dbReference type="SMR" id="B7NTZ0"/>
<dbReference type="STRING" id="585057.ECIAI39_1413"/>
<dbReference type="KEGG" id="ect:ECIAI39_1413"/>
<dbReference type="PATRIC" id="fig|585057.6.peg.1480"/>
<dbReference type="HOGENOM" id="CLU_083287_18_2_6"/>
<dbReference type="Proteomes" id="UP000000749">
    <property type="component" value="Chromosome"/>
</dbReference>
<dbReference type="GO" id="GO:0003677">
    <property type="term" value="F:DNA binding"/>
    <property type="evidence" value="ECO:0007669"/>
    <property type="project" value="UniProtKB-UniRule"/>
</dbReference>
<dbReference type="GO" id="GO:0003700">
    <property type="term" value="F:DNA-binding transcription factor activity"/>
    <property type="evidence" value="ECO:0007669"/>
    <property type="project" value="UniProtKB-UniRule"/>
</dbReference>
<dbReference type="GO" id="GO:0006950">
    <property type="term" value="P:response to stress"/>
    <property type="evidence" value="ECO:0007669"/>
    <property type="project" value="TreeGrafter"/>
</dbReference>
<dbReference type="FunFam" id="1.10.10.10:FF:000261">
    <property type="entry name" value="Transcriptional regulator SlyA"/>
    <property type="match status" value="1"/>
</dbReference>
<dbReference type="Gene3D" id="1.10.10.10">
    <property type="entry name" value="Winged helix-like DNA-binding domain superfamily/Winged helix DNA-binding domain"/>
    <property type="match status" value="1"/>
</dbReference>
<dbReference type="HAMAP" id="MF_01819">
    <property type="entry name" value="HTH_type_SlyA"/>
    <property type="match status" value="1"/>
</dbReference>
<dbReference type="InterPro" id="IPR000835">
    <property type="entry name" value="HTH_MarR-typ"/>
</dbReference>
<dbReference type="InterPro" id="IPR039422">
    <property type="entry name" value="MarR/SlyA-like"/>
</dbReference>
<dbReference type="InterPro" id="IPR023187">
    <property type="entry name" value="Tscrpt_reg_MarR-type_CS"/>
</dbReference>
<dbReference type="InterPro" id="IPR023071">
    <property type="entry name" value="Tscrpt_reg_SlyA"/>
</dbReference>
<dbReference type="InterPro" id="IPR036388">
    <property type="entry name" value="WH-like_DNA-bd_sf"/>
</dbReference>
<dbReference type="InterPro" id="IPR036390">
    <property type="entry name" value="WH_DNA-bd_sf"/>
</dbReference>
<dbReference type="NCBIfam" id="NF002926">
    <property type="entry name" value="PRK03573.1"/>
    <property type="match status" value="1"/>
</dbReference>
<dbReference type="PANTHER" id="PTHR33164:SF64">
    <property type="entry name" value="TRANSCRIPTIONAL REGULATOR SLYA"/>
    <property type="match status" value="1"/>
</dbReference>
<dbReference type="PANTHER" id="PTHR33164">
    <property type="entry name" value="TRANSCRIPTIONAL REGULATOR, MARR FAMILY"/>
    <property type="match status" value="1"/>
</dbReference>
<dbReference type="Pfam" id="PF01047">
    <property type="entry name" value="MarR"/>
    <property type="match status" value="1"/>
</dbReference>
<dbReference type="PRINTS" id="PR00598">
    <property type="entry name" value="HTHMARR"/>
</dbReference>
<dbReference type="SMART" id="SM00347">
    <property type="entry name" value="HTH_MARR"/>
    <property type="match status" value="1"/>
</dbReference>
<dbReference type="SUPFAM" id="SSF46785">
    <property type="entry name" value="Winged helix' DNA-binding domain"/>
    <property type="match status" value="1"/>
</dbReference>
<dbReference type="PROSITE" id="PS01117">
    <property type="entry name" value="HTH_MARR_1"/>
    <property type="match status" value="1"/>
</dbReference>
<dbReference type="PROSITE" id="PS50995">
    <property type="entry name" value="HTH_MARR_2"/>
    <property type="match status" value="1"/>
</dbReference>
<sequence length="144" mass="16380">MESPLGSDLARLVRIWRALIDHRLKPLELTQTHWVTLHNIHQLPPDQSQIQLAKAIGIEQPSLVRTLDQLEEKGLISRQTCASDRRAKRIKLTEKAEPLISEMEAVINKTRAEILHGISAEELEQLIKLIAKLEHNIIELQAKG</sequence>
<protein>
    <recommendedName>
        <fullName evidence="1">Transcriptional regulator SlyA</fullName>
    </recommendedName>
</protein>
<organism>
    <name type="scientific">Escherichia coli O7:K1 (strain IAI39 / ExPEC)</name>
    <dbReference type="NCBI Taxonomy" id="585057"/>
    <lineage>
        <taxon>Bacteria</taxon>
        <taxon>Pseudomonadati</taxon>
        <taxon>Pseudomonadota</taxon>
        <taxon>Gammaproteobacteria</taxon>
        <taxon>Enterobacterales</taxon>
        <taxon>Enterobacteriaceae</taxon>
        <taxon>Escherichia</taxon>
    </lineage>
</organism>
<comment type="function">
    <text evidence="1">Transcription regulator that can specifically activate or repress expression of target genes.</text>
</comment>
<comment type="subunit">
    <text evidence="1">Homodimer.</text>
</comment>
<comment type="similarity">
    <text evidence="1">Belongs to the SlyA family.</text>
</comment>
<keyword id="KW-0010">Activator</keyword>
<keyword id="KW-0238">DNA-binding</keyword>
<keyword id="KW-0678">Repressor</keyword>
<keyword id="KW-0804">Transcription</keyword>
<keyword id="KW-0805">Transcription regulation</keyword>
<accession>B7NTZ0</accession>
<gene>
    <name evidence="1" type="primary">slyA</name>
    <name type="ordered locus">ECIAI39_1413</name>
</gene>